<protein>
    <recommendedName>
        <fullName>Aromatase</fullName>
        <ecNumber evidence="2">1.14.14.14</ecNumber>
    </recommendedName>
    <alternativeName>
        <fullName>CYPXIX</fullName>
    </alternativeName>
    <alternativeName>
        <fullName>Cytochrome P-450AROM</fullName>
    </alternativeName>
    <alternativeName>
        <fullName>Cytochrome P450 19A1</fullName>
    </alternativeName>
    <alternativeName>
        <fullName>Estrogen synthase</fullName>
    </alternativeName>
</protein>
<keyword id="KW-0349">Heme</keyword>
<keyword id="KW-0408">Iron</keyword>
<keyword id="KW-0443">Lipid metabolism</keyword>
<keyword id="KW-0472">Membrane</keyword>
<keyword id="KW-0479">Metal-binding</keyword>
<keyword id="KW-0503">Monooxygenase</keyword>
<keyword id="KW-0560">Oxidoreductase</keyword>
<keyword id="KW-1185">Reference proteome</keyword>
<organism>
    <name type="scientific">Oryctolagus cuniculus</name>
    <name type="common">Rabbit</name>
    <dbReference type="NCBI Taxonomy" id="9986"/>
    <lineage>
        <taxon>Eukaryota</taxon>
        <taxon>Metazoa</taxon>
        <taxon>Chordata</taxon>
        <taxon>Craniata</taxon>
        <taxon>Vertebrata</taxon>
        <taxon>Euteleostomi</taxon>
        <taxon>Mammalia</taxon>
        <taxon>Eutheria</taxon>
        <taxon>Euarchontoglires</taxon>
        <taxon>Glires</taxon>
        <taxon>Lagomorpha</taxon>
        <taxon>Leporidae</taxon>
        <taxon>Oryctolagus</taxon>
    </lineage>
</organism>
<proteinExistence type="evidence at transcript level"/>
<name>CP19A_RABIT</name>
<sequence>MVLEMLNPMHFNITTMVPAAMPAATMPILLLTCLLLLIWNYEGTSSIPGPGYCMGIGPLISYARFLWMGIGSACNYYNKMYGEFIRVWICGEETLIISKSSSMFHVMKHSHYVSRFGSKPGLQCIGMHENGIIFNNNPALWKVVRPFFMKALTGPGLVQMVAICVGSIGRHLDKLEEVTTRSGCVDVLTLMRRIMLDTSNTLFLGIPMDESAIVVKIQGYFDAWQALLLKPNIFFKISWLYKKYEKSVKDLKDAIDILVEKKRRRISTAEKLEDHMDFATNLIFAEKRGDLTRENVNQCVLEMLIAAPDTMSVSVFFMLFLIAKHPSVEEAIMEEIQTVVGERDIRIDDIQKLKVVENFIYESMRYQPVVDLVMRKALEDDVIDGYPVKKGTNIILNIGRMHRLEFFPKPNEFTLENFAKNVPYRYFQPFGFGPRGCAGKYIAMVMMKVILVTLLRRFQVKALQGRSVENIQKKNDLSLHPDETSDLLEMIFTPRNSDTCLGQ</sequence>
<evidence type="ECO:0000250" key="1"/>
<evidence type="ECO:0000250" key="2">
    <source>
        <dbReference type="UniProtKB" id="P11511"/>
    </source>
</evidence>
<evidence type="ECO:0000305" key="3"/>
<gene>
    <name type="primary">CYP19A1</name>
    <name type="synonym">CYP19</name>
</gene>
<comment type="function">
    <text>Catalyzes the formation of aromatic C18 estrogens from C19 androgens.</text>
</comment>
<comment type="catalytic activity">
    <reaction evidence="2">
        <text>testosterone + 3 reduced [NADPH--hemoprotein reductase] + 3 O2 = 17beta-estradiol + formate + 3 oxidized [NADPH--hemoprotein reductase] + 4 H2O + 4 H(+)</text>
        <dbReference type="Rhea" id="RHEA:38191"/>
        <dbReference type="Rhea" id="RHEA-COMP:11964"/>
        <dbReference type="Rhea" id="RHEA-COMP:11965"/>
        <dbReference type="ChEBI" id="CHEBI:15377"/>
        <dbReference type="ChEBI" id="CHEBI:15378"/>
        <dbReference type="ChEBI" id="CHEBI:15379"/>
        <dbReference type="ChEBI" id="CHEBI:15740"/>
        <dbReference type="ChEBI" id="CHEBI:16469"/>
        <dbReference type="ChEBI" id="CHEBI:17347"/>
        <dbReference type="ChEBI" id="CHEBI:57618"/>
        <dbReference type="ChEBI" id="CHEBI:58210"/>
        <dbReference type="EC" id="1.14.14.14"/>
    </reaction>
</comment>
<comment type="catalytic activity">
    <reaction evidence="2">
        <text>androst-4-ene-3,17-dione + 3 reduced [NADPH--hemoprotein reductase] + 3 O2 = estrone + formate + 3 oxidized [NADPH--hemoprotein reductase] + 4 H2O + 4 H(+)</text>
        <dbReference type="Rhea" id="RHEA:38195"/>
        <dbReference type="Rhea" id="RHEA-COMP:11964"/>
        <dbReference type="Rhea" id="RHEA-COMP:11965"/>
        <dbReference type="ChEBI" id="CHEBI:15377"/>
        <dbReference type="ChEBI" id="CHEBI:15378"/>
        <dbReference type="ChEBI" id="CHEBI:15379"/>
        <dbReference type="ChEBI" id="CHEBI:15740"/>
        <dbReference type="ChEBI" id="CHEBI:16422"/>
        <dbReference type="ChEBI" id="CHEBI:17263"/>
        <dbReference type="ChEBI" id="CHEBI:57618"/>
        <dbReference type="ChEBI" id="CHEBI:58210"/>
        <dbReference type="EC" id="1.14.14.14"/>
    </reaction>
</comment>
<comment type="cofactor">
    <cofactor evidence="1">
        <name>heme</name>
        <dbReference type="ChEBI" id="CHEBI:30413"/>
    </cofactor>
</comment>
<comment type="subcellular location">
    <subcellularLocation>
        <location>Membrane</location>
        <topology>Peripheral membrane protein</topology>
    </subcellularLocation>
</comment>
<comment type="similarity">
    <text evidence="3">Belongs to the cytochrome P450 family.</text>
</comment>
<feature type="chain" id="PRO_0000051961" description="Aromatase">
    <location>
        <begin position="1"/>
        <end position="503"/>
    </location>
</feature>
<feature type="binding site" description="axial binding residue" evidence="1">
    <location>
        <position position="437"/>
    </location>
    <ligand>
        <name>heme</name>
        <dbReference type="ChEBI" id="CHEBI:30413"/>
    </ligand>
    <ligandPart>
        <name>Fe</name>
        <dbReference type="ChEBI" id="CHEBI:18248"/>
    </ligandPart>
</feature>
<reference key="1">
    <citation type="journal article" date="1996" name="C. R. Acad. Sci. III, Sci. Vie">
        <title>Rapid sequencing of rabbit aromatase cDNA using RACE PCR.</title>
        <authorList>
            <person name="Delarue B."/>
            <person name="Mittre H."/>
            <person name="Feral C."/>
            <person name="Benhaim A."/>
            <person name="Leymarie P."/>
        </authorList>
    </citation>
    <scope>NUCLEOTIDE SEQUENCE [MRNA]</scope>
    <source>
        <strain>HY</strain>
        <tissue>Ovary</tissue>
    </source>
</reference>
<dbReference type="EC" id="1.14.14.14" evidence="2"/>
<dbReference type="EMBL" id="Z70301">
    <property type="protein sequence ID" value="CAA94314.1"/>
    <property type="molecule type" value="mRNA"/>
</dbReference>
<dbReference type="EMBL" id="Z68271">
    <property type="protein sequence ID" value="CAA92574.1"/>
    <property type="molecule type" value="mRNA"/>
</dbReference>
<dbReference type="RefSeq" id="NP_001164392.1">
    <property type="nucleotide sequence ID" value="NM_001170921.2"/>
</dbReference>
<dbReference type="SMR" id="Q29605"/>
<dbReference type="FunCoup" id="Q29605">
    <property type="interactions" value="7"/>
</dbReference>
<dbReference type="STRING" id="9986.ENSOCUP00000010591"/>
<dbReference type="PaxDb" id="9986-ENSOCUP00000010591"/>
<dbReference type="GeneID" id="100328545"/>
<dbReference type="KEGG" id="ocu:100328545"/>
<dbReference type="CTD" id="1588"/>
<dbReference type="eggNOG" id="KOG0157">
    <property type="taxonomic scope" value="Eukaryota"/>
</dbReference>
<dbReference type="InParanoid" id="Q29605"/>
<dbReference type="OrthoDB" id="1470350at2759"/>
<dbReference type="Proteomes" id="UP000001811">
    <property type="component" value="Unplaced"/>
</dbReference>
<dbReference type="GO" id="GO:0005783">
    <property type="term" value="C:endoplasmic reticulum"/>
    <property type="evidence" value="ECO:0007669"/>
    <property type="project" value="TreeGrafter"/>
</dbReference>
<dbReference type="GO" id="GO:0016020">
    <property type="term" value="C:membrane"/>
    <property type="evidence" value="ECO:0007669"/>
    <property type="project" value="UniProtKB-SubCell"/>
</dbReference>
<dbReference type="GO" id="GO:0070330">
    <property type="term" value="F:aromatase activity"/>
    <property type="evidence" value="ECO:0007669"/>
    <property type="project" value="UniProtKB-EC"/>
</dbReference>
<dbReference type="GO" id="GO:0020037">
    <property type="term" value="F:heme binding"/>
    <property type="evidence" value="ECO:0007669"/>
    <property type="project" value="InterPro"/>
</dbReference>
<dbReference type="GO" id="GO:0005506">
    <property type="term" value="F:iron ion binding"/>
    <property type="evidence" value="ECO:0007669"/>
    <property type="project" value="InterPro"/>
</dbReference>
<dbReference type="GO" id="GO:0008585">
    <property type="term" value="P:female gonad development"/>
    <property type="evidence" value="ECO:0007669"/>
    <property type="project" value="TreeGrafter"/>
</dbReference>
<dbReference type="GO" id="GO:0006629">
    <property type="term" value="P:lipid metabolic process"/>
    <property type="evidence" value="ECO:0007669"/>
    <property type="project" value="UniProtKB-KW"/>
</dbReference>
<dbReference type="GO" id="GO:0032355">
    <property type="term" value="P:response to estradiol"/>
    <property type="evidence" value="ECO:0007669"/>
    <property type="project" value="TreeGrafter"/>
</dbReference>
<dbReference type="CDD" id="cd20616">
    <property type="entry name" value="CYP19A1"/>
    <property type="match status" value="1"/>
</dbReference>
<dbReference type="FunFam" id="1.10.630.10:FF:000032">
    <property type="entry name" value="Cytochrome P450 aromatase"/>
    <property type="match status" value="1"/>
</dbReference>
<dbReference type="Gene3D" id="1.10.630.10">
    <property type="entry name" value="Cytochrome P450"/>
    <property type="match status" value="1"/>
</dbReference>
<dbReference type="InterPro" id="IPR001128">
    <property type="entry name" value="Cyt_P450"/>
</dbReference>
<dbReference type="InterPro" id="IPR017972">
    <property type="entry name" value="Cyt_P450_CS"/>
</dbReference>
<dbReference type="InterPro" id="IPR002401">
    <property type="entry name" value="Cyt_P450_E_grp-I"/>
</dbReference>
<dbReference type="InterPro" id="IPR036396">
    <property type="entry name" value="Cyt_P450_sf"/>
</dbReference>
<dbReference type="InterPro" id="IPR050196">
    <property type="entry name" value="Cytochrome_P450_Monoox"/>
</dbReference>
<dbReference type="PANTHER" id="PTHR24291:SF43">
    <property type="entry name" value="AROMATASE"/>
    <property type="match status" value="1"/>
</dbReference>
<dbReference type="PANTHER" id="PTHR24291">
    <property type="entry name" value="CYTOCHROME P450 FAMILY 4"/>
    <property type="match status" value="1"/>
</dbReference>
<dbReference type="Pfam" id="PF00067">
    <property type="entry name" value="p450"/>
    <property type="match status" value="1"/>
</dbReference>
<dbReference type="PRINTS" id="PR00463">
    <property type="entry name" value="EP450I"/>
</dbReference>
<dbReference type="PRINTS" id="PR00385">
    <property type="entry name" value="P450"/>
</dbReference>
<dbReference type="SUPFAM" id="SSF48264">
    <property type="entry name" value="Cytochrome P450"/>
    <property type="match status" value="1"/>
</dbReference>
<dbReference type="PROSITE" id="PS00086">
    <property type="entry name" value="CYTOCHROME_P450"/>
    <property type="match status" value="1"/>
</dbReference>
<accession>Q29605</accession>